<proteinExistence type="inferred from homology"/>
<dbReference type="EMBL" id="CR382126">
    <property type="protein sequence ID" value="CAG97924.1"/>
    <property type="molecule type" value="Genomic_DNA"/>
</dbReference>
<dbReference type="RefSeq" id="XP_455216.1">
    <property type="nucleotide sequence ID" value="XM_455216.1"/>
</dbReference>
<dbReference type="SMR" id="Q6CLH3"/>
<dbReference type="FunCoup" id="Q6CLH3">
    <property type="interactions" value="1263"/>
</dbReference>
<dbReference type="STRING" id="284590.Q6CLH3"/>
<dbReference type="PaxDb" id="284590-Q6CLH3"/>
<dbReference type="KEGG" id="kla:KLLA0_F03014g"/>
<dbReference type="eggNOG" id="KOG1076">
    <property type="taxonomic scope" value="Eukaryota"/>
</dbReference>
<dbReference type="HOGENOM" id="CLU_004304_0_2_1"/>
<dbReference type="InParanoid" id="Q6CLH3"/>
<dbReference type="OMA" id="FRCGLIK"/>
<dbReference type="Proteomes" id="UP000000598">
    <property type="component" value="Chromosome F"/>
</dbReference>
<dbReference type="GO" id="GO:0016282">
    <property type="term" value="C:eukaryotic 43S preinitiation complex"/>
    <property type="evidence" value="ECO:0007669"/>
    <property type="project" value="UniProtKB-UniRule"/>
</dbReference>
<dbReference type="GO" id="GO:0033290">
    <property type="term" value="C:eukaryotic 48S preinitiation complex"/>
    <property type="evidence" value="ECO:0007669"/>
    <property type="project" value="UniProtKB-UniRule"/>
</dbReference>
<dbReference type="GO" id="GO:0005852">
    <property type="term" value="C:eukaryotic translation initiation factor 3 complex"/>
    <property type="evidence" value="ECO:0007669"/>
    <property type="project" value="UniProtKB-UniRule"/>
</dbReference>
<dbReference type="GO" id="GO:0008541">
    <property type="term" value="C:proteasome regulatory particle, lid subcomplex"/>
    <property type="evidence" value="ECO:0007669"/>
    <property type="project" value="UniProtKB-ARBA"/>
</dbReference>
<dbReference type="GO" id="GO:0003723">
    <property type="term" value="F:RNA binding"/>
    <property type="evidence" value="ECO:0007669"/>
    <property type="project" value="InterPro"/>
</dbReference>
<dbReference type="GO" id="GO:0003743">
    <property type="term" value="F:translation initiation factor activity"/>
    <property type="evidence" value="ECO:0007669"/>
    <property type="project" value="UniProtKB-UniRule"/>
</dbReference>
<dbReference type="GO" id="GO:0031369">
    <property type="term" value="F:translation initiation factor binding"/>
    <property type="evidence" value="ECO:0007669"/>
    <property type="project" value="InterPro"/>
</dbReference>
<dbReference type="GO" id="GO:0001732">
    <property type="term" value="P:formation of cytoplasmic translation initiation complex"/>
    <property type="evidence" value="ECO:0007669"/>
    <property type="project" value="UniProtKB-UniRule"/>
</dbReference>
<dbReference type="Gene3D" id="1.10.10.10">
    <property type="entry name" value="Winged helix-like DNA-binding domain superfamily/Winged helix DNA-binding domain"/>
    <property type="match status" value="1"/>
</dbReference>
<dbReference type="HAMAP" id="MF_03002">
    <property type="entry name" value="eIF3c"/>
    <property type="match status" value="1"/>
</dbReference>
<dbReference type="InterPro" id="IPR027516">
    <property type="entry name" value="EIF3C"/>
</dbReference>
<dbReference type="InterPro" id="IPR008905">
    <property type="entry name" value="EIF3C_N_dom"/>
</dbReference>
<dbReference type="InterPro" id="IPR000717">
    <property type="entry name" value="PCI_dom"/>
</dbReference>
<dbReference type="InterPro" id="IPR036388">
    <property type="entry name" value="WH-like_DNA-bd_sf"/>
</dbReference>
<dbReference type="InterPro" id="IPR036390">
    <property type="entry name" value="WH_DNA-bd_sf"/>
</dbReference>
<dbReference type="PANTHER" id="PTHR13937">
    <property type="entry name" value="EUKARYOTIC TRANSLATION INITATION FACTOR 3, SUBUNIT 8 EIF3S8 -RELATED"/>
    <property type="match status" value="1"/>
</dbReference>
<dbReference type="PANTHER" id="PTHR13937:SF0">
    <property type="entry name" value="EUKARYOTIC TRANSLATION INITIATION FACTOR 3 SUBUNIT C-RELATED"/>
    <property type="match status" value="1"/>
</dbReference>
<dbReference type="Pfam" id="PF05470">
    <property type="entry name" value="eIF-3c_N"/>
    <property type="match status" value="2"/>
</dbReference>
<dbReference type="Pfam" id="PF01399">
    <property type="entry name" value="PCI"/>
    <property type="match status" value="1"/>
</dbReference>
<dbReference type="SMART" id="SM00088">
    <property type="entry name" value="PINT"/>
    <property type="match status" value="1"/>
</dbReference>
<dbReference type="SUPFAM" id="SSF46785">
    <property type="entry name" value="Winged helix' DNA-binding domain"/>
    <property type="match status" value="1"/>
</dbReference>
<dbReference type="PROSITE" id="PS50250">
    <property type="entry name" value="PCI"/>
    <property type="match status" value="1"/>
</dbReference>
<feature type="chain" id="PRO_0000364284" description="Eukaryotic translation initiation factor 3 subunit C">
    <location>
        <begin position="1"/>
        <end position="819"/>
    </location>
</feature>
<feature type="domain" description="PCI" evidence="2">
    <location>
        <begin position="620"/>
        <end position="795"/>
    </location>
</feature>
<feature type="region of interest" description="Disordered" evidence="3">
    <location>
        <begin position="1"/>
        <end position="106"/>
    </location>
</feature>
<feature type="compositionally biased region" description="Acidic residues" evidence="3">
    <location>
        <begin position="17"/>
        <end position="41"/>
    </location>
</feature>
<feature type="compositionally biased region" description="Acidic residues" evidence="3">
    <location>
        <begin position="47"/>
        <end position="59"/>
    </location>
</feature>
<reference key="1">
    <citation type="journal article" date="2004" name="Nature">
        <title>Genome evolution in yeasts.</title>
        <authorList>
            <person name="Dujon B."/>
            <person name="Sherman D."/>
            <person name="Fischer G."/>
            <person name="Durrens P."/>
            <person name="Casaregola S."/>
            <person name="Lafontaine I."/>
            <person name="de Montigny J."/>
            <person name="Marck C."/>
            <person name="Neuveglise C."/>
            <person name="Talla E."/>
            <person name="Goffard N."/>
            <person name="Frangeul L."/>
            <person name="Aigle M."/>
            <person name="Anthouard V."/>
            <person name="Babour A."/>
            <person name="Barbe V."/>
            <person name="Barnay S."/>
            <person name="Blanchin S."/>
            <person name="Beckerich J.-M."/>
            <person name="Beyne E."/>
            <person name="Bleykasten C."/>
            <person name="Boisrame A."/>
            <person name="Boyer J."/>
            <person name="Cattolico L."/>
            <person name="Confanioleri F."/>
            <person name="de Daruvar A."/>
            <person name="Despons L."/>
            <person name="Fabre E."/>
            <person name="Fairhead C."/>
            <person name="Ferry-Dumazet H."/>
            <person name="Groppi A."/>
            <person name="Hantraye F."/>
            <person name="Hennequin C."/>
            <person name="Jauniaux N."/>
            <person name="Joyet P."/>
            <person name="Kachouri R."/>
            <person name="Kerrest A."/>
            <person name="Koszul R."/>
            <person name="Lemaire M."/>
            <person name="Lesur I."/>
            <person name="Ma L."/>
            <person name="Muller H."/>
            <person name="Nicaud J.-M."/>
            <person name="Nikolski M."/>
            <person name="Oztas S."/>
            <person name="Ozier-Kalogeropoulos O."/>
            <person name="Pellenz S."/>
            <person name="Potier S."/>
            <person name="Richard G.-F."/>
            <person name="Straub M.-L."/>
            <person name="Suleau A."/>
            <person name="Swennen D."/>
            <person name="Tekaia F."/>
            <person name="Wesolowski-Louvel M."/>
            <person name="Westhof E."/>
            <person name="Wirth B."/>
            <person name="Zeniou-Meyer M."/>
            <person name="Zivanovic Y."/>
            <person name="Bolotin-Fukuhara M."/>
            <person name="Thierry A."/>
            <person name="Bouchier C."/>
            <person name="Caudron B."/>
            <person name="Scarpelli C."/>
            <person name="Gaillardin C."/>
            <person name="Weissenbach J."/>
            <person name="Wincker P."/>
            <person name="Souciet J.-L."/>
        </authorList>
    </citation>
    <scope>NUCLEOTIDE SEQUENCE [LARGE SCALE GENOMIC DNA]</scope>
    <source>
        <strain>ATCC 8585 / CBS 2359 / DSM 70799 / NBRC 1267 / NRRL Y-1140 / WM37</strain>
    </source>
</reference>
<organism>
    <name type="scientific">Kluyveromyces lactis (strain ATCC 8585 / CBS 2359 / DSM 70799 / NBRC 1267 / NRRL Y-1140 / WM37)</name>
    <name type="common">Yeast</name>
    <name type="synonym">Candida sphaerica</name>
    <dbReference type="NCBI Taxonomy" id="284590"/>
    <lineage>
        <taxon>Eukaryota</taxon>
        <taxon>Fungi</taxon>
        <taxon>Dikarya</taxon>
        <taxon>Ascomycota</taxon>
        <taxon>Saccharomycotina</taxon>
        <taxon>Saccharomycetes</taxon>
        <taxon>Saccharomycetales</taxon>
        <taxon>Saccharomycetaceae</taxon>
        <taxon>Kluyveromyces</taxon>
    </lineage>
</organism>
<protein>
    <recommendedName>
        <fullName evidence="1">Eukaryotic translation initiation factor 3 subunit C</fullName>
        <shortName evidence="1">eIF3c</shortName>
    </recommendedName>
    <alternativeName>
        <fullName evidence="1">Eukaryotic translation initiation factor 3 93 kDa subunit homolog</fullName>
        <shortName evidence="1">eIF3 p93</shortName>
    </alternativeName>
    <alternativeName>
        <fullName evidence="1">Translation initiation factor eIF3, p93 subunit homolog</fullName>
    </alternativeName>
</protein>
<accession>Q6CLH3</accession>
<evidence type="ECO:0000255" key="1">
    <source>
        <dbReference type="HAMAP-Rule" id="MF_03002"/>
    </source>
</evidence>
<evidence type="ECO:0000255" key="2">
    <source>
        <dbReference type="PROSITE-ProRule" id="PRU01185"/>
    </source>
</evidence>
<evidence type="ECO:0000256" key="3">
    <source>
        <dbReference type="SAM" id="MobiDB-lite"/>
    </source>
</evidence>
<sequence length="819" mass="94187">MSRFFLKTYEYDSTSSGEEEDLLSQSEEDLVSSSSEEELSDDSFFNDSDESSDNDEDNDSDSKPYGPDWFKKPEFRKGGGSGANKFLKSTNYSSDEDSSDEEDGKKVVKSAKEKLLDEMKSIYQKIDSAEAQQDWESLLNHLETILKLYTKAQQQNYGTPNIFVKSLARFEDAVSATSQDEIKNKAVARAYNTTKQRVKKLIRENETSVKAYRENPEDFDKEPVLDADIDSRDVSATPFSLSGKKNLDLASVANNISELDFFKTLNIIIDSRGKKNTDHTEQIKTTEELLKIAKTPYEKICTYLNLIPIRFDASVSLSYQPLEQWKASKDNLDGLLEVLEQEIDHYQVTEFAPRNDFIEDEPEANEHGVKEILGSIFSMVERLDDEFSKSLLNIDTRSSEYMERLRDEQSIYNLIIRSQLYFERVTAEEHRDRLLARVFNRRLEHIYYKSDKLISIMETVAWKQIREGTASLESSFVRLNESDSADADYNFKVISELSDFLIKQKSNNVFNYRKGTLYKTYYIALNQEYAPAKKIMLSSDIAKFISGSDAALQILYNRCVIQLGLAAFKAGLINECHQVLNGLCINPHLREILGQQSLQRANANSNVVQGAPVEQLCLPFHQHINLDLIDTVYMTCSLLLDVPHMAAYYSGIKVKRIPVFQKSIRRILESSEKAIFHGPPETLRDHILYAAKSMQKGDYLQSIEYLRKISVWSLLSKSDDIINQLSEKVQIETLKTYIFTYKRFYSKISISKLSKLFDLDIEKVLAVAQNIINDYEVKAKLDENNEYIIFERGEEITKLEEVAIKLVKETKYHSERLRQ</sequence>
<keyword id="KW-0963">Cytoplasm</keyword>
<keyword id="KW-0396">Initiation factor</keyword>
<keyword id="KW-0648">Protein biosynthesis</keyword>
<keyword id="KW-1185">Reference proteome</keyword>
<comment type="function">
    <text evidence="1">Component of the eukaryotic translation initiation factor 3 (eIF-3) complex, which is involved in protein synthesis of a specialized repertoire of mRNAs and, together with other initiation factors, stimulates binding of mRNA and methionyl-tRNAi to the 40S ribosome. The eIF-3 complex specifically targets and initiates translation of a subset of mRNAs involved in cell proliferation.</text>
</comment>
<comment type="subunit">
    <text evidence="1">Component of the eukaryotic translation initiation factor 3 (eIF-3) complex.</text>
</comment>
<comment type="subcellular location">
    <subcellularLocation>
        <location evidence="1">Cytoplasm</location>
    </subcellularLocation>
</comment>
<comment type="similarity">
    <text evidence="1">Belongs to the eIF-3 subunit C family.</text>
</comment>
<name>EIF3C_KLULA</name>
<gene>
    <name evidence="1" type="primary">NIP1</name>
    <name type="ordered locus">KLLA0F03014g</name>
</gene>